<proteinExistence type="inferred from homology"/>
<gene>
    <name evidence="1" type="primary">dabA</name>
    <name type="ordered locus">Noc_1251</name>
</gene>
<organism>
    <name type="scientific">Nitrosococcus oceani (strain ATCC 19707 / BCRC 17464 / JCM 30415 / NCIMB 11848 / C-107)</name>
    <dbReference type="NCBI Taxonomy" id="323261"/>
    <lineage>
        <taxon>Bacteria</taxon>
        <taxon>Pseudomonadati</taxon>
        <taxon>Pseudomonadota</taxon>
        <taxon>Gammaproteobacteria</taxon>
        <taxon>Chromatiales</taxon>
        <taxon>Chromatiaceae</taxon>
        <taxon>Nitrosococcus</taxon>
    </lineage>
</organism>
<reference key="1">
    <citation type="journal article" date="2006" name="Appl. Environ. Microbiol.">
        <title>Complete genome sequence of the marine, chemolithoautotrophic, ammonia-oxidizing bacterium Nitrosococcus oceani ATCC 19707.</title>
        <authorList>
            <person name="Klotz M.G."/>
            <person name="Arp D.J."/>
            <person name="Chain P.S.G."/>
            <person name="El-Sheikh A.F."/>
            <person name="Hauser L.J."/>
            <person name="Hommes N.G."/>
            <person name="Larimer F.W."/>
            <person name="Malfatti S.A."/>
            <person name="Norton J.M."/>
            <person name="Poret-Peterson A.T."/>
            <person name="Vergez L.M."/>
            <person name="Ward B.B."/>
        </authorList>
    </citation>
    <scope>NUCLEOTIDE SEQUENCE [LARGE SCALE GENOMIC DNA]</scope>
    <source>
        <strain>ATCC 19707 / BCRC 17464 / JCM 30415 / NCIMB 11848 / C-107</strain>
    </source>
</reference>
<evidence type="ECO:0000255" key="1">
    <source>
        <dbReference type="HAMAP-Rule" id="MF_01871"/>
    </source>
</evidence>
<evidence type="ECO:0000256" key="2">
    <source>
        <dbReference type="SAM" id="MobiDB-lite"/>
    </source>
</evidence>
<dbReference type="EMBL" id="CP000127">
    <property type="protein sequence ID" value="ABA57752.1"/>
    <property type="molecule type" value="Genomic_DNA"/>
</dbReference>
<dbReference type="RefSeq" id="WP_011330603.1">
    <property type="nucleotide sequence ID" value="NC_007484.1"/>
</dbReference>
<dbReference type="STRING" id="323261.Noc_1251"/>
<dbReference type="KEGG" id="noc:Noc_1251"/>
<dbReference type="eggNOG" id="COG3002">
    <property type="taxonomic scope" value="Bacteria"/>
</dbReference>
<dbReference type="HOGENOM" id="CLU_009885_0_0_6"/>
<dbReference type="InParanoid" id="Q3JBP4"/>
<dbReference type="Proteomes" id="UP000006838">
    <property type="component" value="Chromosome"/>
</dbReference>
<dbReference type="GO" id="GO:0005886">
    <property type="term" value="C:plasma membrane"/>
    <property type="evidence" value="ECO:0007669"/>
    <property type="project" value="UniProtKB-SubCell"/>
</dbReference>
<dbReference type="GO" id="GO:0008270">
    <property type="term" value="F:zinc ion binding"/>
    <property type="evidence" value="ECO:0007669"/>
    <property type="project" value="UniProtKB-UniRule"/>
</dbReference>
<dbReference type="HAMAP" id="MF_01871">
    <property type="entry name" value="DabA"/>
    <property type="match status" value="1"/>
</dbReference>
<dbReference type="InterPro" id="IPR018752">
    <property type="entry name" value="DabA"/>
</dbReference>
<dbReference type="PANTHER" id="PTHR38344:SF1">
    <property type="entry name" value="INORGANIC CARBON TRANSPORTER SUBUNIT DABA-RELATED"/>
    <property type="match status" value="1"/>
</dbReference>
<dbReference type="PANTHER" id="PTHR38344">
    <property type="entry name" value="UPF0753 PROTEIN AQ_863"/>
    <property type="match status" value="1"/>
</dbReference>
<dbReference type="Pfam" id="PF10070">
    <property type="entry name" value="DabA"/>
    <property type="match status" value="1"/>
</dbReference>
<protein>
    <recommendedName>
        <fullName evidence="1">Probable inorganic carbon transporter subunit DabA</fullName>
    </recommendedName>
</protein>
<name>DABA_NITOC</name>
<accession>Q3JBP4</accession>
<keyword id="KW-0997">Cell inner membrane</keyword>
<keyword id="KW-1003">Cell membrane</keyword>
<keyword id="KW-0472">Membrane</keyword>
<keyword id="KW-0479">Metal-binding</keyword>
<keyword id="KW-1185">Reference proteome</keyword>
<keyword id="KW-0813">Transport</keyword>
<keyword id="KW-0862">Zinc</keyword>
<comment type="function">
    <text evidence="1">Part of an energy-coupled inorganic carbon pump.</text>
</comment>
<comment type="cofactor">
    <cofactor evidence="1">
        <name>Zn(2+)</name>
        <dbReference type="ChEBI" id="CHEBI:29105"/>
    </cofactor>
</comment>
<comment type="subunit">
    <text evidence="1">Forms a complex with DabB.</text>
</comment>
<comment type="subcellular location">
    <subcellularLocation>
        <location evidence="1">Cell inner membrane</location>
        <topology evidence="1">Peripheral membrane protein</topology>
    </subcellularLocation>
</comment>
<comment type="similarity">
    <text evidence="1">Belongs to the inorganic carbon transporter (TC 9.A.2) DabA family.</text>
</comment>
<feature type="chain" id="PRO_0000387282" description="Probable inorganic carbon transporter subunit DabA">
    <location>
        <begin position="1"/>
        <end position="1125"/>
    </location>
</feature>
<feature type="region of interest" description="Disordered" evidence="2">
    <location>
        <begin position="1106"/>
        <end position="1125"/>
    </location>
</feature>
<feature type="binding site" evidence="1">
    <location>
        <position position="578"/>
    </location>
    <ligand>
        <name>Zn(2+)</name>
        <dbReference type="ChEBI" id="CHEBI:29105"/>
    </ligand>
</feature>
<feature type="binding site" evidence="1">
    <location>
        <position position="580"/>
    </location>
    <ligand>
        <name>Zn(2+)</name>
        <dbReference type="ChEBI" id="CHEBI:29105"/>
    </ligand>
</feature>
<feature type="binding site" evidence="1">
    <location>
        <position position="769"/>
    </location>
    <ligand>
        <name>Zn(2+)</name>
        <dbReference type="ChEBI" id="CHEBI:29105"/>
    </ligand>
</feature>
<feature type="binding site" evidence="1">
    <location>
        <position position="784"/>
    </location>
    <ligand>
        <name>Zn(2+)</name>
        <dbReference type="ChEBI" id="CHEBI:29105"/>
    </ligand>
</feature>
<sequence>MSAHHAEQAESPLDNREKLTTAVDKLELVLPCAAPLYDFMHLNTMQGYHHISFAEAMAAHFELTGIRGYLPEEDFRKHYARGRIDDADLNESLANNTHGRNREIVLKVSGRPINKQDIWRISLIQDINPLSPSRFRWQIKEYDALERFQNGVPKSARDTLLNATQETDQNRRTESQAIRDLWEACLRVFQLENPNLHSEELGELVDLEEFSRSQAEGKQSKFRTSQPTLIPQEEMLAEARKDLHHLVDKVGEELSLRGLLQALTGEDLLDQVRPILIRFCASHLDEGFTAWSLPERGQGLYAAWRKCPFAELGLDLARLPDWQSFHAELPEHSVDAVIACLERLKIPESRWEGYLKRIAVELPGWSGLINWRHHRPKYKPNRKAPTSLMDYLAIRLFLDVIHIEQVTQNTWGIAGNLEELKTYFENYLWEFSGRYALFSNTLPEYLAIRAQELIALPRTAQKDRENWRTVSNMIHNWKHNPSAERTKRQTVHSHVWRLFCLAQHLGLPGNEVGKLSSSEAEQLLAILDELTTSERGYIWLCAYEYHYREDYFAALTQNHGRGRWANRNERPEAQLIFCFDDREEGIRRHLEEVNPNLETLGAPGFFGVPIQWRGLDYPDTTPHCPVVVTPVNELHEEPRPEAKKRYGLHKRLYNFKQFLLRVLHNKTRRDLLTSKVLIDVLFPGMLAVLAGKVFFPFQQASLKRKATAALVPPVPTQLKLTVPDDGTEATPDNLRVGFTDAEQAERLAAFLRAIGFTSGFAPLVVLSGHGSMSENNPQLASYDCGASGGRHGGPNARAFAAMANRPEIRARLAEQGIHIPDDTWFIGTEHDTCSESFPWFDLDKVPANFAPALKKLKAEVDQALLLSAHERCRRMASAPRKPSLQQARRHVAERGTDFSQARPELGHATVASALIGRRSVTRGIFLDRRCFVLSYDPTIDDAEGTILEGVLKNAGPVGVGINLDYYFSAANNQGFGSGSKVAQNVTGLFGVMQGIDDDLRTWCSYQMVDVHEPMRVLTVVEATTETLTAIYKRQPSSQEPAGGSWLLPPLRQLIDGGWLLLAAIHPKTGKISVFDPKQGFIPWKSYREPSPLPVVERSMDWYDGYSDPRPPALVEPKQTETHHAA</sequence>